<keyword id="KW-0032">Aminotransferase</keyword>
<keyword id="KW-0663">Pyridoxal phosphate</keyword>
<keyword id="KW-1185">Reference proteome</keyword>
<keyword id="KW-0808">Transferase</keyword>
<reference key="1">
    <citation type="journal article" date="2007" name="PLoS Biol.">
        <title>Evolution of symbiotic bacteria in the distal human intestine.</title>
        <authorList>
            <person name="Xu J."/>
            <person name="Mahowald M.A."/>
            <person name="Ley R.E."/>
            <person name="Lozupone C.A."/>
            <person name="Hamady M."/>
            <person name="Martens E.C."/>
            <person name="Henrissat B."/>
            <person name="Coutinho P.M."/>
            <person name="Minx P."/>
            <person name="Latreille P."/>
            <person name="Cordum H."/>
            <person name="Van Brunt A."/>
            <person name="Kim K."/>
            <person name="Fulton R.S."/>
            <person name="Fulton L.A."/>
            <person name="Clifton S.W."/>
            <person name="Wilson R.K."/>
            <person name="Knight R.D."/>
            <person name="Gordon J.I."/>
        </authorList>
    </citation>
    <scope>NUCLEOTIDE SEQUENCE [LARGE SCALE GENOMIC DNA]</scope>
    <source>
        <strain>ATCC 8503 / DSM 20701 / CIP 104284 / JCM 5825 / NCTC 11152</strain>
    </source>
</reference>
<name>DAPAT_PARD8</name>
<sequence>MALINEHFLKLQNNYLFSDIAKKVNSFKVTHPKDKIIRMGIGDVTQPLAPAVIEAMHKAVEEMASKDTFHGYGPEQGYPFLIDAIIKNDYASRGVFIEPSEVFISDGAKSDCGNIGDMLRHDNSIGVTDPVYPVYIDSNVMSGRTGVLENGKWSDVVYIPCTAENNFVPDLPSRRVDILYLCYPNNPTGTTLTKDELKKWVNYALANDVLIMYDSAYEAYIQDPNIPHSIYEIKGAKKVAIEFRSFSKTAGFTGIRCGYTVVPKELNAFTLDGQRVQLNKLWNRRQCTKFNGTSYITQRGAEAVYSTAGKQQVTATINYYMTNAKIMKEGLQNCGLTVYGGDNAPYLWLKTPDGLSSWKFFDKLLYEVKIVGTPGVGFGPSGEGYLRLTAFGDRDDTLEAMARLRKWLR</sequence>
<accession>A6L8U2</accession>
<organism>
    <name type="scientific">Parabacteroides distasonis (strain ATCC 8503 / DSM 20701 / CIP 104284 / JCM 5825 / NCTC 11152)</name>
    <dbReference type="NCBI Taxonomy" id="435591"/>
    <lineage>
        <taxon>Bacteria</taxon>
        <taxon>Pseudomonadati</taxon>
        <taxon>Bacteroidota</taxon>
        <taxon>Bacteroidia</taxon>
        <taxon>Bacteroidales</taxon>
        <taxon>Tannerellaceae</taxon>
        <taxon>Parabacteroides</taxon>
    </lineage>
</organism>
<proteinExistence type="inferred from homology"/>
<protein>
    <recommendedName>
        <fullName evidence="1">LL-diaminopimelate aminotransferase</fullName>
        <shortName evidence="1">DAP-AT</shortName>
        <shortName evidence="1">DAP-aminotransferase</shortName>
        <shortName evidence="1">LL-DAP-aminotransferase</shortName>
        <ecNumber evidence="1">2.6.1.83</ecNumber>
    </recommendedName>
</protein>
<gene>
    <name evidence="1" type="primary">dapL</name>
    <name type="ordered locus">BDI_0321</name>
</gene>
<dbReference type="EC" id="2.6.1.83" evidence="1"/>
<dbReference type="EMBL" id="CP000140">
    <property type="protein sequence ID" value="ABR42106.1"/>
    <property type="molecule type" value="Genomic_DNA"/>
</dbReference>
<dbReference type="RefSeq" id="WP_011965967.1">
    <property type="nucleotide sequence ID" value="NC_009615.1"/>
</dbReference>
<dbReference type="SMR" id="A6L8U2"/>
<dbReference type="STRING" id="435591.BDI_0321"/>
<dbReference type="PaxDb" id="435591-BDI_0321"/>
<dbReference type="KEGG" id="pdi:BDI_0321"/>
<dbReference type="PATRIC" id="fig|435591.13.peg.317"/>
<dbReference type="eggNOG" id="COG0436">
    <property type="taxonomic scope" value="Bacteria"/>
</dbReference>
<dbReference type="HOGENOM" id="CLU_051433_0_0_10"/>
<dbReference type="BioCyc" id="PDIS435591:G1G5A-332-MONOMER"/>
<dbReference type="UniPathway" id="UPA00034">
    <property type="reaction ID" value="UER00466"/>
</dbReference>
<dbReference type="Proteomes" id="UP000000566">
    <property type="component" value="Chromosome"/>
</dbReference>
<dbReference type="GO" id="GO:0010285">
    <property type="term" value="F:L,L-diaminopimelate aminotransferase activity"/>
    <property type="evidence" value="ECO:0007669"/>
    <property type="project" value="UniProtKB-UniRule"/>
</dbReference>
<dbReference type="GO" id="GO:0030170">
    <property type="term" value="F:pyridoxal phosphate binding"/>
    <property type="evidence" value="ECO:0007669"/>
    <property type="project" value="UniProtKB-UniRule"/>
</dbReference>
<dbReference type="GO" id="GO:0033362">
    <property type="term" value="P:lysine biosynthetic process via diaminopimelate, diaminopimelate-aminotransferase pathway"/>
    <property type="evidence" value="ECO:0007669"/>
    <property type="project" value="UniProtKB-UniRule"/>
</dbReference>
<dbReference type="CDD" id="cd00609">
    <property type="entry name" value="AAT_like"/>
    <property type="match status" value="1"/>
</dbReference>
<dbReference type="FunFam" id="3.40.640.10:FF:000099">
    <property type="entry name" value="LL-diaminopimelate aminotransferase, chloroplastic"/>
    <property type="match status" value="1"/>
</dbReference>
<dbReference type="Gene3D" id="3.90.1150.10">
    <property type="entry name" value="Aspartate Aminotransferase, domain 1"/>
    <property type="match status" value="1"/>
</dbReference>
<dbReference type="Gene3D" id="3.40.640.10">
    <property type="entry name" value="Type I PLP-dependent aspartate aminotransferase-like (Major domain)"/>
    <property type="match status" value="1"/>
</dbReference>
<dbReference type="HAMAP" id="MF_01642">
    <property type="entry name" value="DapL_aminotrans_1"/>
    <property type="match status" value="1"/>
</dbReference>
<dbReference type="InterPro" id="IPR004839">
    <property type="entry name" value="Aminotransferase_I/II_large"/>
</dbReference>
<dbReference type="InterPro" id="IPR019942">
    <property type="entry name" value="DapL/ALD1"/>
</dbReference>
<dbReference type="InterPro" id="IPR015424">
    <property type="entry name" value="PyrdxlP-dep_Trfase"/>
</dbReference>
<dbReference type="InterPro" id="IPR015421">
    <property type="entry name" value="PyrdxlP-dep_Trfase_major"/>
</dbReference>
<dbReference type="InterPro" id="IPR015422">
    <property type="entry name" value="PyrdxlP-dep_Trfase_small"/>
</dbReference>
<dbReference type="NCBIfam" id="TIGR03542">
    <property type="entry name" value="DAPAT_plant"/>
    <property type="match status" value="1"/>
</dbReference>
<dbReference type="PANTHER" id="PTHR43144">
    <property type="entry name" value="AMINOTRANSFERASE"/>
    <property type="match status" value="1"/>
</dbReference>
<dbReference type="Pfam" id="PF00155">
    <property type="entry name" value="Aminotran_1_2"/>
    <property type="match status" value="1"/>
</dbReference>
<dbReference type="SUPFAM" id="SSF53383">
    <property type="entry name" value="PLP-dependent transferases"/>
    <property type="match status" value="1"/>
</dbReference>
<comment type="function">
    <text evidence="1">Involved in the synthesis of meso-diaminopimelate (m-DAP or DL-DAP), required for both lysine and peptidoglycan biosynthesis. Catalyzes the direct conversion of tetrahydrodipicolinate to LL-diaminopimelate.</text>
</comment>
<comment type="catalytic activity">
    <reaction evidence="1">
        <text>(2S,6S)-2,6-diaminopimelate + 2-oxoglutarate = (S)-2,3,4,5-tetrahydrodipicolinate + L-glutamate + H2O + H(+)</text>
        <dbReference type="Rhea" id="RHEA:23988"/>
        <dbReference type="ChEBI" id="CHEBI:15377"/>
        <dbReference type="ChEBI" id="CHEBI:15378"/>
        <dbReference type="ChEBI" id="CHEBI:16810"/>
        <dbReference type="ChEBI" id="CHEBI:16845"/>
        <dbReference type="ChEBI" id="CHEBI:29985"/>
        <dbReference type="ChEBI" id="CHEBI:57609"/>
        <dbReference type="EC" id="2.6.1.83"/>
    </reaction>
</comment>
<comment type="cofactor">
    <cofactor evidence="1">
        <name>pyridoxal 5'-phosphate</name>
        <dbReference type="ChEBI" id="CHEBI:597326"/>
    </cofactor>
</comment>
<comment type="pathway">
    <text evidence="1">Amino-acid biosynthesis; L-lysine biosynthesis via DAP pathway; LL-2,6-diaminopimelate from (S)-tetrahydrodipicolinate (aminotransferase route): step 1/1.</text>
</comment>
<comment type="subunit">
    <text evidence="1">Homodimer.</text>
</comment>
<comment type="similarity">
    <text evidence="1">Belongs to the class-I pyridoxal-phosphate-dependent aminotransferase family. LL-diaminopimelate aminotransferase subfamily.</text>
</comment>
<evidence type="ECO:0000255" key="1">
    <source>
        <dbReference type="HAMAP-Rule" id="MF_01642"/>
    </source>
</evidence>
<feature type="chain" id="PRO_0000342252" description="LL-diaminopimelate aminotransferase">
    <location>
        <begin position="1"/>
        <end position="409"/>
    </location>
</feature>
<feature type="binding site" evidence="1">
    <location>
        <position position="15"/>
    </location>
    <ligand>
        <name>substrate</name>
    </ligand>
</feature>
<feature type="binding site" evidence="1">
    <location>
        <position position="42"/>
    </location>
    <ligand>
        <name>substrate</name>
    </ligand>
</feature>
<feature type="binding site" evidence="1">
    <location>
        <position position="72"/>
    </location>
    <ligand>
        <name>pyridoxal 5'-phosphate</name>
        <dbReference type="ChEBI" id="CHEBI:597326"/>
    </ligand>
</feature>
<feature type="binding site" evidence="1">
    <location>
        <begin position="108"/>
        <end position="109"/>
    </location>
    <ligand>
        <name>pyridoxal 5'-phosphate</name>
        <dbReference type="ChEBI" id="CHEBI:597326"/>
    </ligand>
</feature>
<feature type="binding site" evidence="1">
    <location>
        <position position="109"/>
    </location>
    <ligand>
        <name>substrate</name>
    </ligand>
</feature>
<feature type="binding site" evidence="1">
    <location>
        <position position="132"/>
    </location>
    <ligand>
        <name>pyridoxal 5'-phosphate</name>
        <dbReference type="ChEBI" id="CHEBI:597326"/>
    </ligand>
</feature>
<feature type="binding site" evidence="1">
    <location>
        <position position="132"/>
    </location>
    <ligand>
        <name>substrate</name>
    </ligand>
</feature>
<feature type="binding site" evidence="1">
    <location>
        <position position="186"/>
    </location>
    <ligand>
        <name>pyridoxal 5'-phosphate</name>
        <dbReference type="ChEBI" id="CHEBI:597326"/>
    </ligand>
</feature>
<feature type="binding site" evidence="1">
    <location>
        <position position="186"/>
    </location>
    <ligand>
        <name>substrate</name>
    </ligand>
</feature>
<feature type="binding site" evidence="1">
    <location>
        <position position="217"/>
    </location>
    <ligand>
        <name>pyridoxal 5'-phosphate</name>
        <dbReference type="ChEBI" id="CHEBI:597326"/>
    </ligand>
</feature>
<feature type="binding site" evidence="1">
    <location>
        <begin position="245"/>
        <end position="247"/>
    </location>
    <ligand>
        <name>pyridoxal 5'-phosphate</name>
        <dbReference type="ChEBI" id="CHEBI:597326"/>
    </ligand>
</feature>
<feature type="binding site" evidence="1">
    <location>
        <position position="256"/>
    </location>
    <ligand>
        <name>pyridoxal 5'-phosphate</name>
        <dbReference type="ChEBI" id="CHEBI:597326"/>
    </ligand>
</feature>
<feature type="binding site" evidence="1">
    <location>
        <position position="291"/>
    </location>
    <ligand>
        <name>pyridoxal 5'-phosphate</name>
        <dbReference type="ChEBI" id="CHEBI:597326"/>
    </ligand>
</feature>
<feature type="binding site" evidence="1">
    <location>
        <position position="291"/>
    </location>
    <ligand>
        <name>substrate</name>
    </ligand>
</feature>
<feature type="binding site" evidence="1">
    <location>
        <position position="387"/>
    </location>
    <ligand>
        <name>substrate</name>
    </ligand>
</feature>
<feature type="modified residue" description="N6-(pyridoxal phosphate)lysine" evidence="1">
    <location>
        <position position="248"/>
    </location>
</feature>